<reference key="1">
    <citation type="journal article" date="2007" name="J. Bacteriol.">
        <title>The genome sequence of avian pathogenic Escherichia coli strain O1:K1:H7 shares strong similarities with human extraintestinal pathogenic E. coli genomes.</title>
        <authorList>
            <person name="Johnson T.J."/>
            <person name="Kariyawasam S."/>
            <person name="Wannemuehler Y."/>
            <person name="Mangiamele P."/>
            <person name="Johnson S.J."/>
            <person name="Doetkott C."/>
            <person name="Skyberg J.A."/>
            <person name="Lynne A.M."/>
            <person name="Johnson J.R."/>
            <person name="Nolan L.K."/>
        </authorList>
    </citation>
    <scope>NUCLEOTIDE SEQUENCE [LARGE SCALE GENOMIC DNA]</scope>
</reference>
<organism>
    <name type="scientific">Escherichia coli O1:K1 / APEC</name>
    <dbReference type="NCBI Taxonomy" id="405955"/>
    <lineage>
        <taxon>Bacteria</taxon>
        <taxon>Pseudomonadati</taxon>
        <taxon>Pseudomonadota</taxon>
        <taxon>Gammaproteobacteria</taxon>
        <taxon>Enterobacterales</taxon>
        <taxon>Enterobacteriaceae</taxon>
        <taxon>Escherichia</taxon>
    </lineage>
</organism>
<gene>
    <name evidence="1" type="primary">pdxK</name>
    <name type="ordered locus">Ecok1_23310</name>
    <name type="ORF">APECO1_4127</name>
</gene>
<sequence length="283" mass="30848">MSSLLLFNDKSRALQADIVAVQSQVVYGSVGNSIAVPAIKQNGLNVFAVPTVLLSNTPHYDTFYGGAIPDEWFSGYLRALQERDALRQLRAVTTGYMGTASQIKILAEWLTALRKDHPDLLIMVDPVIGDIDSGIYVKPDLPEAYRQYLLPLAQGITPNIFELEILTGKDCRDLDSAIAAAKSLLSDTLKWVVITSASGNEENQEMQVVVVSADSVNVISHSRVKTDLKGTGDLFCAQLISGLLKGKALTDAVHRAGLRVLEVMRYTQQHESDELILPPLAEA</sequence>
<feature type="chain" id="PRO_1000069883" description="Pyridoxine/pyridoxal/pyridoxamine kinase">
    <location>
        <begin position="1"/>
        <end position="283"/>
    </location>
</feature>
<feature type="binding site" evidence="1">
    <location>
        <position position="23"/>
    </location>
    <ligand>
        <name>substrate</name>
    </ligand>
</feature>
<feature type="binding site" evidence="1">
    <location>
        <position position="59"/>
    </location>
    <ligand>
        <name>substrate</name>
    </ligand>
</feature>
<feature type="binding site" evidence="1">
    <location>
        <position position="125"/>
    </location>
    <ligand>
        <name>ATP</name>
        <dbReference type="ChEBI" id="CHEBI:30616"/>
    </ligand>
</feature>
<feature type="binding site" evidence="1">
    <location>
        <position position="136"/>
    </location>
    <ligand>
        <name>Mg(2+)</name>
        <dbReference type="ChEBI" id="CHEBI:18420"/>
    </ligand>
</feature>
<feature type="binding site" evidence="1">
    <location>
        <position position="157"/>
    </location>
    <ligand>
        <name>ATP</name>
        <dbReference type="ChEBI" id="CHEBI:30616"/>
    </ligand>
</feature>
<feature type="binding site" evidence="1">
    <location>
        <position position="162"/>
    </location>
    <ligand>
        <name>ATP</name>
        <dbReference type="ChEBI" id="CHEBI:30616"/>
    </ligand>
</feature>
<feature type="binding site" evidence="1">
    <location>
        <position position="162"/>
    </location>
    <ligand>
        <name>Mg(2+)</name>
        <dbReference type="ChEBI" id="CHEBI:18420"/>
    </ligand>
</feature>
<feature type="binding site" evidence="1">
    <location>
        <position position="195"/>
    </location>
    <ligand>
        <name>ATP</name>
        <dbReference type="ChEBI" id="CHEBI:30616"/>
    </ligand>
</feature>
<feature type="binding site" evidence="1">
    <location>
        <begin position="221"/>
        <end position="224"/>
    </location>
    <ligand>
        <name>ATP</name>
        <dbReference type="ChEBI" id="CHEBI:30616"/>
    </ligand>
</feature>
<feature type="binding site" evidence="1">
    <location>
        <position position="231"/>
    </location>
    <ligand>
        <name>ATP</name>
        <dbReference type="ChEBI" id="CHEBI:30616"/>
    </ligand>
</feature>
<feature type="binding site" evidence="1">
    <location>
        <position position="233"/>
    </location>
    <ligand>
        <name>substrate</name>
    </ligand>
</feature>
<comment type="function">
    <text evidence="1">B6-vitamer kinase involved in the salvage pathway of pyridoxal 5'-phosphate (PLP). Catalyzes the phosphorylation of pyridoxine (PN), pyridoxal (PL), and pyridoxamine (PM), forming their respective 5'-phosphorylated esters, i.e. PNP, PLP and PMP.</text>
</comment>
<comment type="catalytic activity">
    <reaction evidence="1">
        <text>pyridoxal + ATP = pyridoxal 5'-phosphate + ADP + H(+)</text>
        <dbReference type="Rhea" id="RHEA:10224"/>
        <dbReference type="ChEBI" id="CHEBI:15378"/>
        <dbReference type="ChEBI" id="CHEBI:17310"/>
        <dbReference type="ChEBI" id="CHEBI:30616"/>
        <dbReference type="ChEBI" id="CHEBI:456216"/>
        <dbReference type="ChEBI" id="CHEBI:597326"/>
        <dbReference type="EC" id="2.7.1.35"/>
    </reaction>
</comment>
<comment type="catalytic activity">
    <reaction evidence="1">
        <text>pyridoxine + ATP = pyridoxine 5'-phosphate + ADP + H(+)</text>
        <dbReference type="Rhea" id="RHEA:25108"/>
        <dbReference type="ChEBI" id="CHEBI:15378"/>
        <dbReference type="ChEBI" id="CHEBI:16709"/>
        <dbReference type="ChEBI" id="CHEBI:30616"/>
        <dbReference type="ChEBI" id="CHEBI:58589"/>
        <dbReference type="ChEBI" id="CHEBI:456216"/>
        <dbReference type="EC" id="2.7.1.35"/>
    </reaction>
</comment>
<comment type="catalytic activity">
    <reaction evidence="1">
        <text>pyridoxamine + ATP = pyridoxamine 5'-phosphate + ADP + H(+)</text>
        <dbReference type="Rhea" id="RHEA:25104"/>
        <dbReference type="ChEBI" id="CHEBI:15378"/>
        <dbReference type="ChEBI" id="CHEBI:30616"/>
        <dbReference type="ChEBI" id="CHEBI:57761"/>
        <dbReference type="ChEBI" id="CHEBI:58451"/>
        <dbReference type="ChEBI" id="CHEBI:456216"/>
        <dbReference type="EC" id="2.7.1.35"/>
    </reaction>
</comment>
<comment type="cofactor">
    <cofactor evidence="1">
        <name>Mg(2+)</name>
        <dbReference type="ChEBI" id="CHEBI:18420"/>
    </cofactor>
</comment>
<comment type="pathway">
    <text evidence="1">Cofactor metabolism; pyridoxal 5'-phosphate salvage; pyridoxal 5'-phosphate from pyridoxal: step 1/1.</text>
</comment>
<comment type="pathway">
    <text evidence="1">Cofactor metabolism; pyridoxal 5'-phosphate salvage; pyridoxine 5'-phosphate from pyridoxine: step 1/1.</text>
</comment>
<comment type="pathway">
    <text evidence="1">Cofactor metabolism; pyridoxal 5'-phosphate salvage; pyridoxamine 5'-phosphate from pyridoxamine: step 1/1.</text>
</comment>
<comment type="subunit">
    <text evidence="1">Homodimer.</text>
</comment>
<comment type="similarity">
    <text evidence="1">Belongs to the pyridoxine kinase family. PdxK subfamily.</text>
</comment>
<keyword id="KW-0067">ATP-binding</keyword>
<keyword id="KW-0418">Kinase</keyword>
<keyword id="KW-0460">Magnesium</keyword>
<keyword id="KW-0479">Metal-binding</keyword>
<keyword id="KW-0547">Nucleotide-binding</keyword>
<keyword id="KW-1185">Reference proteome</keyword>
<keyword id="KW-0808">Transferase</keyword>
<keyword id="KW-0862">Zinc</keyword>
<accession>A1ADT5</accession>
<dbReference type="EC" id="2.7.1.35" evidence="1"/>
<dbReference type="EMBL" id="CP000468">
    <property type="protein sequence ID" value="ABJ01825.1"/>
    <property type="molecule type" value="Genomic_DNA"/>
</dbReference>
<dbReference type="RefSeq" id="WP_000096640.1">
    <property type="nucleotide sequence ID" value="NZ_CADILS010000039.1"/>
</dbReference>
<dbReference type="SMR" id="A1ADT5"/>
<dbReference type="KEGG" id="ecv:APECO1_4127"/>
<dbReference type="HOGENOM" id="CLU_046496_3_1_6"/>
<dbReference type="UniPathway" id="UPA01068">
    <property type="reaction ID" value="UER00298"/>
</dbReference>
<dbReference type="UniPathway" id="UPA01068">
    <property type="reaction ID" value="UER00299"/>
</dbReference>
<dbReference type="UniPathway" id="UPA01068">
    <property type="reaction ID" value="UER00300"/>
</dbReference>
<dbReference type="Proteomes" id="UP000008216">
    <property type="component" value="Chromosome"/>
</dbReference>
<dbReference type="GO" id="GO:0005829">
    <property type="term" value="C:cytosol"/>
    <property type="evidence" value="ECO:0007669"/>
    <property type="project" value="TreeGrafter"/>
</dbReference>
<dbReference type="GO" id="GO:0005524">
    <property type="term" value="F:ATP binding"/>
    <property type="evidence" value="ECO:0007669"/>
    <property type="project" value="UniProtKB-UniRule"/>
</dbReference>
<dbReference type="GO" id="GO:0008902">
    <property type="term" value="F:hydroxymethylpyrimidine kinase activity"/>
    <property type="evidence" value="ECO:0007669"/>
    <property type="project" value="TreeGrafter"/>
</dbReference>
<dbReference type="GO" id="GO:0000287">
    <property type="term" value="F:magnesium ion binding"/>
    <property type="evidence" value="ECO:0007669"/>
    <property type="project" value="UniProtKB-UniRule"/>
</dbReference>
<dbReference type="GO" id="GO:0008478">
    <property type="term" value="F:pyridoxal kinase activity"/>
    <property type="evidence" value="ECO:0007669"/>
    <property type="project" value="UniProtKB-UniRule"/>
</dbReference>
<dbReference type="GO" id="GO:0008270">
    <property type="term" value="F:zinc ion binding"/>
    <property type="evidence" value="ECO:0007669"/>
    <property type="project" value="UniProtKB-UniRule"/>
</dbReference>
<dbReference type="GO" id="GO:0009443">
    <property type="term" value="P:pyridoxal 5'-phosphate salvage"/>
    <property type="evidence" value="ECO:0007669"/>
    <property type="project" value="UniProtKB-UniRule"/>
</dbReference>
<dbReference type="CDD" id="cd01173">
    <property type="entry name" value="pyridoxal_pyridoxamine_kinase"/>
    <property type="match status" value="1"/>
</dbReference>
<dbReference type="FunFam" id="3.40.1190.20:FF:000009">
    <property type="entry name" value="Pyridoxine/pyridoxal/pyridoxamine kinase"/>
    <property type="match status" value="1"/>
</dbReference>
<dbReference type="Gene3D" id="3.40.1190.20">
    <property type="match status" value="1"/>
</dbReference>
<dbReference type="HAMAP" id="MF_01638">
    <property type="entry name" value="PdxK"/>
    <property type="match status" value="1"/>
</dbReference>
<dbReference type="InterPro" id="IPR023479">
    <property type="entry name" value="PdxK"/>
</dbReference>
<dbReference type="InterPro" id="IPR013749">
    <property type="entry name" value="PM/HMP-P_kinase-1"/>
</dbReference>
<dbReference type="InterPro" id="IPR004625">
    <property type="entry name" value="PyrdxlKinase"/>
</dbReference>
<dbReference type="InterPro" id="IPR029056">
    <property type="entry name" value="Ribokinase-like"/>
</dbReference>
<dbReference type="NCBIfam" id="NF006034">
    <property type="entry name" value="PRK08176.1"/>
    <property type="match status" value="1"/>
</dbReference>
<dbReference type="NCBIfam" id="TIGR00687">
    <property type="entry name" value="pyridox_kin"/>
    <property type="match status" value="1"/>
</dbReference>
<dbReference type="PANTHER" id="PTHR10534">
    <property type="entry name" value="PYRIDOXAL KINASE"/>
    <property type="match status" value="1"/>
</dbReference>
<dbReference type="PANTHER" id="PTHR10534:SF15">
    <property type="entry name" value="PYRIDOXINE_PYRIDOXAL_PYRIDOXAMINE KINASE"/>
    <property type="match status" value="1"/>
</dbReference>
<dbReference type="Pfam" id="PF08543">
    <property type="entry name" value="Phos_pyr_kin"/>
    <property type="match status" value="1"/>
</dbReference>
<dbReference type="SUPFAM" id="SSF53613">
    <property type="entry name" value="Ribokinase-like"/>
    <property type="match status" value="1"/>
</dbReference>
<protein>
    <recommendedName>
        <fullName evidence="1">Pyridoxine/pyridoxal/pyridoxamine kinase</fullName>
        <shortName evidence="1">PN/PL/PM kinase</shortName>
        <ecNumber evidence="1">2.7.1.35</ecNumber>
    </recommendedName>
    <alternativeName>
        <fullName evidence="1">B6-vitamer kinase</fullName>
    </alternativeName>
</protein>
<proteinExistence type="inferred from homology"/>
<evidence type="ECO:0000255" key="1">
    <source>
        <dbReference type="HAMAP-Rule" id="MF_01638"/>
    </source>
</evidence>
<name>PDXK_ECOK1</name>